<gene>
    <name evidence="1" type="primary">rutF</name>
    <name type="ordered locus">Ent638_1520</name>
</gene>
<proteinExistence type="inferred from homology"/>
<keyword id="KW-0285">Flavoprotein</keyword>
<keyword id="KW-0288">FMN</keyword>
<keyword id="KW-0520">NAD</keyword>
<keyword id="KW-0560">Oxidoreductase</keyword>
<evidence type="ECO:0000255" key="1">
    <source>
        <dbReference type="HAMAP-Rule" id="MF_00833"/>
    </source>
</evidence>
<sequence>MSTLDVQTFRDAMACVGAAVNIITTDGPAGQAGFTASAVCSVTDSPPTLLVCLNRGASVWPTFNENRTLCVNTLSAGQEPLSNLFGGKTPMADRFAAARWQTGETGCPRLEDALASFDCRISQVVSVGTHDILFCTIESITRHPAPQGLVWFDRGYHALLRPAC</sequence>
<reference key="1">
    <citation type="journal article" date="2010" name="PLoS Genet.">
        <title>Genome sequence of the plant growth promoting endophytic bacterium Enterobacter sp. 638.</title>
        <authorList>
            <person name="Taghavi S."/>
            <person name="van der Lelie D."/>
            <person name="Hoffman A."/>
            <person name="Zhang Y.B."/>
            <person name="Walla M.D."/>
            <person name="Vangronsveld J."/>
            <person name="Newman L."/>
            <person name="Monchy S."/>
        </authorList>
    </citation>
    <scope>NUCLEOTIDE SEQUENCE [LARGE SCALE GENOMIC DNA]</scope>
    <source>
        <strain>638</strain>
    </source>
</reference>
<protein>
    <recommendedName>
        <fullName evidence="1">FMN reductase (NADH) RutF</fullName>
        <ecNumber evidence="1">1.5.1.42</ecNumber>
    </recommendedName>
    <alternativeName>
        <fullName evidence="1">FMN reductase</fullName>
    </alternativeName>
    <alternativeName>
        <fullName evidence="1">NADH-flavin reductase RutF</fullName>
    </alternativeName>
    <alternativeName>
        <fullName evidence="1">NADH:flavin oxidoreductase</fullName>
    </alternativeName>
</protein>
<name>RUTF_ENT38</name>
<feature type="chain" id="PRO_0000402996" description="FMN reductase (NADH) RutF">
    <location>
        <begin position="1"/>
        <end position="164"/>
    </location>
</feature>
<comment type="function">
    <text evidence="1">Catalyzes the reduction of FMN to FMNH2 which is used to reduce pyrimidine by RutA via the Rut pathway.</text>
</comment>
<comment type="catalytic activity">
    <reaction evidence="1">
        <text>FMNH2 + NAD(+) = FMN + NADH + 2 H(+)</text>
        <dbReference type="Rhea" id="RHEA:21620"/>
        <dbReference type="ChEBI" id="CHEBI:15378"/>
        <dbReference type="ChEBI" id="CHEBI:57540"/>
        <dbReference type="ChEBI" id="CHEBI:57618"/>
        <dbReference type="ChEBI" id="CHEBI:57945"/>
        <dbReference type="ChEBI" id="CHEBI:58210"/>
        <dbReference type="EC" id="1.5.1.42"/>
    </reaction>
</comment>
<comment type="similarity">
    <text evidence="1">Belongs to the non-flavoprotein flavin reductase family. RutF subfamily.</text>
</comment>
<dbReference type="EC" id="1.5.1.42" evidence="1"/>
<dbReference type="EMBL" id="CP000653">
    <property type="protein sequence ID" value="ABP60200.1"/>
    <property type="molecule type" value="Genomic_DNA"/>
</dbReference>
<dbReference type="RefSeq" id="WP_012016917.1">
    <property type="nucleotide sequence ID" value="NC_009436.1"/>
</dbReference>
<dbReference type="SMR" id="A4W920"/>
<dbReference type="STRING" id="399742.Ent638_1520"/>
<dbReference type="KEGG" id="ent:Ent638_1520"/>
<dbReference type="eggNOG" id="COG1853">
    <property type="taxonomic scope" value="Bacteria"/>
</dbReference>
<dbReference type="HOGENOM" id="CLU_059021_2_2_6"/>
<dbReference type="OrthoDB" id="6401628at2"/>
<dbReference type="Proteomes" id="UP000000230">
    <property type="component" value="Chromosome"/>
</dbReference>
<dbReference type="GO" id="GO:0010181">
    <property type="term" value="F:FMN binding"/>
    <property type="evidence" value="ECO:0007669"/>
    <property type="project" value="InterPro"/>
</dbReference>
<dbReference type="GO" id="GO:0052874">
    <property type="term" value="F:FMN reductase (NADH) activity"/>
    <property type="evidence" value="ECO:0007669"/>
    <property type="project" value="UniProtKB-EC"/>
</dbReference>
<dbReference type="GO" id="GO:0008752">
    <property type="term" value="F:FMN reductase [NAD(P)H] activity"/>
    <property type="evidence" value="ECO:0007669"/>
    <property type="project" value="InterPro"/>
</dbReference>
<dbReference type="GO" id="GO:0042602">
    <property type="term" value="F:riboflavin reductase (NADPH) activity"/>
    <property type="evidence" value="ECO:0007669"/>
    <property type="project" value="UniProtKB-UniRule"/>
</dbReference>
<dbReference type="GO" id="GO:0019740">
    <property type="term" value="P:nitrogen utilization"/>
    <property type="evidence" value="ECO:0007669"/>
    <property type="project" value="UniProtKB-UniRule"/>
</dbReference>
<dbReference type="GO" id="GO:0006212">
    <property type="term" value="P:uracil catabolic process"/>
    <property type="evidence" value="ECO:0007669"/>
    <property type="project" value="UniProtKB-UniRule"/>
</dbReference>
<dbReference type="FunFam" id="2.30.110.10:FF:000002">
    <property type="entry name" value="FMN reductase (NADH) RutF"/>
    <property type="match status" value="1"/>
</dbReference>
<dbReference type="Gene3D" id="2.30.110.10">
    <property type="entry name" value="Electron Transport, Fmn-binding Protein, Chain A"/>
    <property type="match status" value="1"/>
</dbReference>
<dbReference type="HAMAP" id="MF_00833">
    <property type="entry name" value="RutF"/>
    <property type="match status" value="1"/>
</dbReference>
<dbReference type="InterPro" id="IPR002563">
    <property type="entry name" value="Flavin_Rdtase-like_dom"/>
</dbReference>
<dbReference type="InterPro" id="IPR050268">
    <property type="entry name" value="NADH-dep_flavin_reductase"/>
</dbReference>
<dbReference type="InterPro" id="IPR019917">
    <property type="entry name" value="RutF"/>
</dbReference>
<dbReference type="InterPro" id="IPR012349">
    <property type="entry name" value="Split_barrel_FMN-bd"/>
</dbReference>
<dbReference type="NCBIfam" id="TIGR03615">
    <property type="entry name" value="RutF"/>
    <property type="match status" value="1"/>
</dbReference>
<dbReference type="PANTHER" id="PTHR30466">
    <property type="entry name" value="FLAVIN REDUCTASE"/>
    <property type="match status" value="1"/>
</dbReference>
<dbReference type="PANTHER" id="PTHR30466:SF1">
    <property type="entry name" value="FMN REDUCTASE (NADH) RUTF"/>
    <property type="match status" value="1"/>
</dbReference>
<dbReference type="Pfam" id="PF01613">
    <property type="entry name" value="Flavin_Reduct"/>
    <property type="match status" value="1"/>
</dbReference>
<dbReference type="SMART" id="SM00903">
    <property type="entry name" value="Flavin_Reduct"/>
    <property type="match status" value="1"/>
</dbReference>
<dbReference type="SUPFAM" id="SSF50475">
    <property type="entry name" value="FMN-binding split barrel"/>
    <property type="match status" value="1"/>
</dbReference>
<accession>A4W920</accession>
<organism>
    <name type="scientific">Enterobacter sp. (strain 638)</name>
    <dbReference type="NCBI Taxonomy" id="399742"/>
    <lineage>
        <taxon>Bacteria</taxon>
        <taxon>Pseudomonadati</taxon>
        <taxon>Pseudomonadota</taxon>
        <taxon>Gammaproteobacteria</taxon>
        <taxon>Enterobacterales</taxon>
        <taxon>Enterobacteriaceae</taxon>
        <taxon>Enterobacter</taxon>
    </lineage>
</organism>